<proteinExistence type="evidence at protein level"/>
<organism>
    <name type="scientific">Rattus norvegicus</name>
    <name type="common">Rat</name>
    <dbReference type="NCBI Taxonomy" id="10116"/>
    <lineage>
        <taxon>Eukaryota</taxon>
        <taxon>Metazoa</taxon>
        <taxon>Chordata</taxon>
        <taxon>Craniata</taxon>
        <taxon>Vertebrata</taxon>
        <taxon>Euteleostomi</taxon>
        <taxon>Mammalia</taxon>
        <taxon>Eutheria</taxon>
        <taxon>Euarchontoglires</taxon>
        <taxon>Glires</taxon>
        <taxon>Rodentia</taxon>
        <taxon>Myomorpha</taxon>
        <taxon>Muroidea</taxon>
        <taxon>Muridae</taxon>
        <taxon>Murinae</taxon>
        <taxon>Rattus</taxon>
    </lineage>
</organism>
<protein>
    <recommendedName>
        <fullName>Leucyl-cystinyl aminopeptidase</fullName>
        <shortName>Cystinyl aminopeptidase</shortName>
        <ecNumber>3.4.11.3</ecNumber>
    </recommendedName>
    <alternativeName>
        <fullName>GP160</fullName>
    </alternativeName>
    <alternativeName>
        <fullName>Insulin-regulated membrane aminopeptidase</fullName>
    </alternativeName>
    <alternativeName>
        <fullName>Insulin-responsive aminopeptidase</fullName>
        <shortName>IRAP</shortName>
    </alternativeName>
    <alternativeName>
        <fullName>Oxytocinase</fullName>
        <shortName>OTase</shortName>
    </alternativeName>
    <alternativeName>
        <fullName>Placental leucine aminopeptidase</fullName>
        <shortName>P-LAP</shortName>
    </alternativeName>
    <alternativeName>
        <fullName>Vesicle protein of 165 kDa</fullName>
        <shortName>Vp165</shortName>
    </alternativeName>
</protein>
<evidence type="ECO:0000250" key="1"/>
<evidence type="ECO:0000250" key="2">
    <source>
        <dbReference type="UniProtKB" id="Q8C129"/>
    </source>
</evidence>
<evidence type="ECO:0000250" key="3">
    <source>
        <dbReference type="UniProtKB" id="Q9UIQ6"/>
    </source>
</evidence>
<evidence type="ECO:0000255" key="4"/>
<evidence type="ECO:0000255" key="5">
    <source>
        <dbReference type="PROSITE-ProRule" id="PRU10095"/>
    </source>
</evidence>
<evidence type="ECO:0000269" key="6">
    <source>
    </source>
</evidence>
<evidence type="ECO:0000305" key="7"/>
<dbReference type="EC" id="3.4.11.3"/>
<dbReference type="EMBL" id="U76997">
    <property type="protein sequence ID" value="AAB19066.1"/>
    <property type="molecule type" value="mRNA"/>
</dbReference>
<dbReference type="EMBL" id="U32990">
    <property type="protein sequence ID" value="AAB38021.1"/>
    <property type="molecule type" value="mRNA"/>
</dbReference>
<dbReference type="PIR" id="I55441">
    <property type="entry name" value="I55441"/>
</dbReference>
<dbReference type="RefSeq" id="NP_001106874.1">
    <property type="nucleotide sequence ID" value="NM_001113403.3"/>
</dbReference>
<dbReference type="RefSeq" id="NP_598258.1">
    <property type="nucleotide sequence ID" value="NM_133574.1"/>
</dbReference>
<dbReference type="RefSeq" id="XP_008757040.1">
    <property type="nucleotide sequence ID" value="XM_008758818.2"/>
</dbReference>
<dbReference type="RefSeq" id="XP_017443357.1">
    <property type="nucleotide sequence ID" value="XM_017587868.1"/>
</dbReference>
<dbReference type="SMR" id="P97629"/>
<dbReference type="FunCoup" id="P97629">
    <property type="interactions" value="1313"/>
</dbReference>
<dbReference type="IntAct" id="P97629">
    <property type="interactions" value="2"/>
</dbReference>
<dbReference type="STRING" id="10116.ENSRNOP00000069259"/>
<dbReference type="BindingDB" id="P97629"/>
<dbReference type="ChEMBL" id="CHEMBL3712"/>
<dbReference type="DrugCentral" id="P97629"/>
<dbReference type="MEROPS" id="M01.011"/>
<dbReference type="GlyCosmos" id="P97629">
    <property type="glycosylation" value="17 sites, No reported glycans"/>
</dbReference>
<dbReference type="GlyGen" id="P97629">
    <property type="glycosylation" value="18 sites"/>
</dbReference>
<dbReference type="iPTMnet" id="P97629"/>
<dbReference type="PhosphoSitePlus" id="P97629"/>
<dbReference type="SwissPalm" id="P97629"/>
<dbReference type="jPOST" id="P97629"/>
<dbReference type="PaxDb" id="10116-ENSRNOP00000017718"/>
<dbReference type="Ensembl" id="ENSRNOT00000017718.7">
    <property type="protein sequence ID" value="ENSRNOP00000017718.6"/>
    <property type="gene ID" value="ENSRNOG00000055229.2"/>
</dbReference>
<dbReference type="GeneID" id="171105"/>
<dbReference type="KEGG" id="rno:171105"/>
<dbReference type="UCSC" id="RGD:621752">
    <property type="organism name" value="rat"/>
</dbReference>
<dbReference type="AGR" id="RGD:621752"/>
<dbReference type="CTD" id="4012"/>
<dbReference type="RGD" id="621752">
    <property type="gene designation" value="Lnpep"/>
</dbReference>
<dbReference type="eggNOG" id="KOG1046">
    <property type="taxonomic scope" value="Eukaryota"/>
</dbReference>
<dbReference type="GeneTree" id="ENSGT00940000157902"/>
<dbReference type="HOGENOM" id="CLU_003705_2_2_1"/>
<dbReference type="InParanoid" id="P97629"/>
<dbReference type="OrthoDB" id="22905at9989"/>
<dbReference type="PhylomeDB" id="P97629"/>
<dbReference type="BRENDA" id="3.4.11.3">
    <property type="organism ID" value="5301"/>
</dbReference>
<dbReference type="Reactome" id="R-RNO-1236977">
    <property type="pathway name" value="Endosomal/Vacuolar pathway"/>
</dbReference>
<dbReference type="Reactome" id="R-RNO-983168">
    <property type="pathway name" value="Antigen processing: Ubiquitination &amp; Proteasome degradation"/>
</dbReference>
<dbReference type="PRO" id="PR:P97629"/>
<dbReference type="Proteomes" id="UP000002494">
    <property type="component" value="Chromosome 1"/>
</dbReference>
<dbReference type="GO" id="GO:0009986">
    <property type="term" value="C:cell surface"/>
    <property type="evidence" value="ECO:0000314"/>
    <property type="project" value="RGD"/>
</dbReference>
<dbReference type="GO" id="GO:0005737">
    <property type="term" value="C:cytoplasm"/>
    <property type="evidence" value="ECO:0000318"/>
    <property type="project" value="GO_Central"/>
</dbReference>
<dbReference type="GO" id="GO:0030659">
    <property type="term" value="C:cytoplasmic vesicle membrane"/>
    <property type="evidence" value="ECO:0000266"/>
    <property type="project" value="RGD"/>
</dbReference>
<dbReference type="GO" id="GO:0005615">
    <property type="term" value="C:extracellular space"/>
    <property type="evidence" value="ECO:0000318"/>
    <property type="project" value="GO_Central"/>
</dbReference>
<dbReference type="GO" id="GO:0032593">
    <property type="term" value="C:insulin-responsive compartment"/>
    <property type="evidence" value="ECO:0000314"/>
    <property type="project" value="RGD"/>
</dbReference>
<dbReference type="GO" id="GO:0016020">
    <property type="term" value="C:membrane"/>
    <property type="evidence" value="ECO:0000266"/>
    <property type="project" value="RGD"/>
</dbReference>
<dbReference type="GO" id="GO:0043025">
    <property type="term" value="C:neuronal cell body"/>
    <property type="evidence" value="ECO:0000314"/>
    <property type="project" value="RGD"/>
</dbReference>
<dbReference type="GO" id="GO:0048471">
    <property type="term" value="C:perinuclear region of cytoplasm"/>
    <property type="evidence" value="ECO:0000314"/>
    <property type="project" value="RGD"/>
</dbReference>
<dbReference type="GO" id="GO:0005886">
    <property type="term" value="C:plasma membrane"/>
    <property type="evidence" value="ECO:0000314"/>
    <property type="project" value="ARUK-UCL"/>
</dbReference>
<dbReference type="GO" id="GO:0031982">
    <property type="term" value="C:vesicle"/>
    <property type="evidence" value="ECO:0000314"/>
    <property type="project" value="RGD"/>
</dbReference>
<dbReference type="GO" id="GO:0004177">
    <property type="term" value="F:aminopeptidase activity"/>
    <property type="evidence" value="ECO:0000314"/>
    <property type="project" value="RGD"/>
</dbReference>
<dbReference type="GO" id="GO:0070006">
    <property type="term" value="F:metalloaminopeptidase activity"/>
    <property type="evidence" value="ECO:0000318"/>
    <property type="project" value="GO_Central"/>
</dbReference>
<dbReference type="GO" id="GO:0042277">
    <property type="term" value="F:peptide binding"/>
    <property type="evidence" value="ECO:0000318"/>
    <property type="project" value="GO_Central"/>
</dbReference>
<dbReference type="GO" id="GO:0008270">
    <property type="term" value="F:zinc ion binding"/>
    <property type="evidence" value="ECO:0000318"/>
    <property type="project" value="GO_Central"/>
</dbReference>
<dbReference type="GO" id="GO:0120163">
    <property type="term" value="P:negative regulation of cold-induced thermogenesis"/>
    <property type="evidence" value="ECO:0000250"/>
    <property type="project" value="YuBioLab"/>
</dbReference>
<dbReference type="GO" id="GO:0010813">
    <property type="term" value="P:neuropeptide catabolic process"/>
    <property type="evidence" value="ECO:0000315"/>
    <property type="project" value="RGD"/>
</dbReference>
<dbReference type="GO" id="GO:0043171">
    <property type="term" value="P:peptide catabolic process"/>
    <property type="evidence" value="ECO:0000314"/>
    <property type="project" value="RGD"/>
</dbReference>
<dbReference type="GO" id="GO:0045777">
    <property type="term" value="P:positive regulation of blood pressure"/>
    <property type="evidence" value="ECO:0000315"/>
    <property type="project" value="RGD"/>
</dbReference>
<dbReference type="GO" id="GO:0030163">
    <property type="term" value="P:protein catabolic process"/>
    <property type="evidence" value="ECO:0000266"/>
    <property type="project" value="RGD"/>
</dbReference>
<dbReference type="GO" id="GO:0006508">
    <property type="term" value="P:proteolysis"/>
    <property type="evidence" value="ECO:0000318"/>
    <property type="project" value="GO_Central"/>
</dbReference>
<dbReference type="GO" id="GO:0008217">
    <property type="term" value="P:regulation of blood pressure"/>
    <property type="evidence" value="ECO:0000318"/>
    <property type="project" value="GO_Central"/>
</dbReference>
<dbReference type="GO" id="GO:0048169">
    <property type="term" value="P:regulation of long-term neuronal synaptic plasticity"/>
    <property type="evidence" value="ECO:0000315"/>
    <property type="project" value="RGD"/>
</dbReference>
<dbReference type="GO" id="GO:0009725">
    <property type="term" value="P:response to hormone"/>
    <property type="evidence" value="ECO:0000314"/>
    <property type="project" value="RGD"/>
</dbReference>
<dbReference type="CDD" id="cd09601">
    <property type="entry name" value="M1_APN-Q_like"/>
    <property type="match status" value="1"/>
</dbReference>
<dbReference type="FunFam" id="1.10.390.10:FF:000010">
    <property type="entry name" value="Leucyl-cystinyl aminopeptidase"/>
    <property type="match status" value="1"/>
</dbReference>
<dbReference type="FunFam" id="1.25.50.20:FF:000003">
    <property type="entry name" value="Leucyl-cystinyl aminopeptidase"/>
    <property type="match status" value="1"/>
</dbReference>
<dbReference type="FunFam" id="2.60.40.1730:FF:000001">
    <property type="entry name" value="Leucyl-cystinyl aminopeptidase"/>
    <property type="match status" value="1"/>
</dbReference>
<dbReference type="FunFam" id="2.60.40.1910:FF:000001">
    <property type="entry name" value="Leucyl-cystinyl aminopeptidase"/>
    <property type="match status" value="1"/>
</dbReference>
<dbReference type="Gene3D" id="1.25.50.20">
    <property type="match status" value="1"/>
</dbReference>
<dbReference type="Gene3D" id="2.60.40.1910">
    <property type="match status" value="1"/>
</dbReference>
<dbReference type="Gene3D" id="1.10.390.10">
    <property type="entry name" value="Neutral Protease Domain 2"/>
    <property type="match status" value="1"/>
</dbReference>
<dbReference type="Gene3D" id="2.60.40.1730">
    <property type="entry name" value="tricorn interacting facor f3 domain"/>
    <property type="match status" value="1"/>
</dbReference>
<dbReference type="InterPro" id="IPR045357">
    <property type="entry name" value="Aminopeptidase_N-like_N"/>
</dbReference>
<dbReference type="InterPro" id="IPR042097">
    <property type="entry name" value="Aminopeptidase_N-like_N_sf"/>
</dbReference>
<dbReference type="InterPro" id="IPR024571">
    <property type="entry name" value="ERAP1-like_C_dom"/>
</dbReference>
<dbReference type="InterPro" id="IPR034016">
    <property type="entry name" value="M1_APN-typ"/>
</dbReference>
<dbReference type="InterPro" id="IPR001930">
    <property type="entry name" value="Peptidase_M1"/>
</dbReference>
<dbReference type="InterPro" id="IPR050344">
    <property type="entry name" value="Peptidase_M1_aminopeptidases"/>
</dbReference>
<dbReference type="InterPro" id="IPR014782">
    <property type="entry name" value="Peptidase_M1_dom"/>
</dbReference>
<dbReference type="InterPro" id="IPR027268">
    <property type="entry name" value="Peptidase_M4/M1_CTD_sf"/>
</dbReference>
<dbReference type="PANTHER" id="PTHR11533:SF42">
    <property type="entry name" value="LEUCYL-CYSTINYL AMINOPEPTIDASE"/>
    <property type="match status" value="1"/>
</dbReference>
<dbReference type="PANTHER" id="PTHR11533">
    <property type="entry name" value="PROTEASE M1 ZINC METALLOPROTEASE"/>
    <property type="match status" value="1"/>
</dbReference>
<dbReference type="Pfam" id="PF11838">
    <property type="entry name" value="ERAP1_C"/>
    <property type="match status" value="1"/>
</dbReference>
<dbReference type="Pfam" id="PF01433">
    <property type="entry name" value="Peptidase_M1"/>
    <property type="match status" value="1"/>
</dbReference>
<dbReference type="Pfam" id="PF17900">
    <property type="entry name" value="Peptidase_M1_N"/>
    <property type="match status" value="1"/>
</dbReference>
<dbReference type="PRINTS" id="PR00756">
    <property type="entry name" value="ALADIPTASE"/>
</dbReference>
<dbReference type="SUPFAM" id="SSF63737">
    <property type="entry name" value="Leukotriene A4 hydrolase N-terminal domain"/>
    <property type="match status" value="1"/>
</dbReference>
<dbReference type="SUPFAM" id="SSF55486">
    <property type="entry name" value="Metalloproteases ('zincins'), catalytic domain"/>
    <property type="match status" value="1"/>
</dbReference>
<dbReference type="PROSITE" id="PS00142">
    <property type="entry name" value="ZINC_PROTEASE"/>
    <property type="match status" value="1"/>
</dbReference>
<feature type="chain" id="PRO_0000095115" description="Leucyl-cystinyl aminopeptidase">
    <location>
        <begin position="1"/>
        <end position="1025"/>
    </location>
</feature>
<feature type="topological domain" description="Cytoplasmic" evidence="4">
    <location>
        <begin position="1"/>
        <end position="109"/>
    </location>
</feature>
<feature type="transmembrane region" description="Helical; Signal-anchor for type II membrane protein" evidence="4">
    <location>
        <begin position="110"/>
        <end position="131"/>
    </location>
</feature>
<feature type="topological domain" description="Extracellular" evidence="4">
    <location>
        <begin position="132"/>
        <end position="1025"/>
    </location>
</feature>
<feature type="region of interest" description="Tankyrase binding" evidence="1">
    <location>
        <begin position="96"/>
        <end position="101"/>
    </location>
</feature>
<feature type="short sequence motif" description="Dileucine internalization motif" evidence="4">
    <location>
        <begin position="53"/>
        <end position="54"/>
    </location>
</feature>
<feature type="short sequence motif" description="Dileucine internalization motif" evidence="4">
    <location>
        <begin position="76"/>
        <end position="77"/>
    </location>
</feature>
<feature type="active site" description="Proton acceptor" evidence="5">
    <location>
        <position position="465"/>
    </location>
</feature>
<feature type="binding site" evidence="1">
    <location>
        <position position="295"/>
    </location>
    <ligand>
        <name>substrate</name>
    </ligand>
</feature>
<feature type="binding site" evidence="1">
    <location>
        <begin position="428"/>
        <end position="432"/>
    </location>
    <ligand>
        <name>substrate</name>
    </ligand>
</feature>
<feature type="binding site" evidence="5">
    <location>
        <position position="464"/>
    </location>
    <ligand>
        <name>Zn(2+)</name>
        <dbReference type="ChEBI" id="CHEBI:29105"/>
        <note>catalytic</note>
    </ligand>
</feature>
<feature type="binding site" evidence="5">
    <location>
        <position position="468"/>
    </location>
    <ligand>
        <name>Zn(2+)</name>
        <dbReference type="ChEBI" id="CHEBI:29105"/>
        <note>catalytic</note>
    </ligand>
</feature>
<feature type="binding site" evidence="5">
    <location>
        <position position="487"/>
    </location>
    <ligand>
        <name>Zn(2+)</name>
        <dbReference type="ChEBI" id="CHEBI:29105"/>
        <note>catalytic</note>
    </ligand>
</feature>
<feature type="site" description="Transition state stabilizer" evidence="1">
    <location>
        <position position="549"/>
    </location>
</feature>
<feature type="modified residue" description="N-acetylmethionine" evidence="3">
    <location>
        <position position="1"/>
    </location>
</feature>
<feature type="modified residue" description="Phosphotyrosine" evidence="2">
    <location>
        <position position="70"/>
    </location>
</feature>
<feature type="modified residue" description="Phosphoserine; by PKC/PRKCZ; in vitro" evidence="6">
    <location>
        <position position="80"/>
    </location>
</feature>
<feature type="modified residue" description="Phosphoserine; by PKC/PRKCZ; in vitro" evidence="6">
    <location>
        <position position="91"/>
    </location>
</feature>
<feature type="glycosylation site" description="N-linked (GlcNAc...) asparagine" evidence="4">
    <location>
        <position position="145"/>
    </location>
</feature>
<feature type="glycosylation site" description="N-linked (GlcNAc...) asparagine" evidence="4">
    <location>
        <position position="184"/>
    </location>
</feature>
<feature type="glycosylation site" description="N-linked (GlcNAc...) asparagine" evidence="4">
    <location>
        <position position="215"/>
    </location>
</feature>
<feature type="glycosylation site" description="N-linked (GlcNAc...) asparagine" evidence="4">
    <location>
        <position position="256"/>
    </location>
</feature>
<feature type="glycosylation site" description="N-linked (GlcNAc...) asparagine" evidence="4">
    <location>
        <position position="266"/>
    </location>
</feature>
<feature type="glycosylation site" description="N-linked (GlcNAc...) asparagine" evidence="4">
    <location>
        <position position="368"/>
    </location>
</feature>
<feature type="glycosylation site" description="N-linked (GlcNAc...) asparagine" evidence="4">
    <location>
        <position position="374"/>
    </location>
</feature>
<feature type="glycosylation site" description="N-linked (GlcNAc...) asparagine" evidence="4">
    <location>
        <position position="447"/>
    </location>
</feature>
<feature type="glycosylation site" description="N-linked (GlcNAc...) asparagine" evidence="4">
    <location>
        <position position="525"/>
    </location>
</feature>
<feature type="glycosylation site" description="N-linked (GlcNAc...) asparagine" evidence="4">
    <location>
        <position position="578"/>
    </location>
</feature>
<feature type="glycosylation site" description="N-linked (GlcNAc...) asparagine" evidence="4">
    <location>
        <position position="664"/>
    </location>
</feature>
<feature type="glycosylation site" description="N-linked (GlcNAc...) asparagine" evidence="4">
    <location>
        <position position="682"/>
    </location>
</feature>
<feature type="glycosylation site" description="N-linked (GlcNAc...) asparagine" evidence="4">
    <location>
        <position position="695"/>
    </location>
</feature>
<feature type="glycosylation site" description="N-linked (GlcNAc...) asparagine" evidence="4">
    <location>
        <position position="758"/>
    </location>
</feature>
<feature type="glycosylation site" description="N-linked (GlcNAc...) asparagine" evidence="4">
    <location>
        <position position="834"/>
    </location>
</feature>
<feature type="glycosylation site" description="N-linked (GlcNAc...) asparagine" evidence="4">
    <location>
        <position position="850"/>
    </location>
</feature>
<feature type="glycosylation site" description="N-linked (GlcNAc...) asparagine" evidence="4">
    <location>
        <position position="989"/>
    </location>
</feature>
<feature type="sequence conflict" description="In Ref. 1; AAB38021." evidence="7" ref="1">
    <original>LMKSSLDG</original>
    <variation>YGTTQRAW</variation>
    <location>
        <begin position="909"/>
        <end position="916"/>
    </location>
</feature>
<feature type="sequence conflict" description="In Ref. 1; AAB38021." evidence="7" ref="1">
    <location>
        <begin position="916"/>
        <end position="1025"/>
    </location>
</feature>
<keyword id="KW-0007">Acetylation</keyword>
<keyword id="KW-0031">Aminopeptidase</keyword>
<keyword id="KW-1003">Cell membrane</keyword>
<keyword id="KW-0903">Direct protein sequencing</keyword>
<keyword id="KW-0325">Glycoprotein</keyword>
<keyword id="KW-0378">Hydrolase</keyword>
<keyword id="KW-0472">Membrane</keyword>
<keyword id="KW-0479">Metal-binding</keyword>
<keyword id="KW-0482">Metalloprotease</keyword>
<keyword id="KW-0597">Phosphoprotein</keyword>
<keyword id="KW-0645">Protease</keyword>
<keyword id="KW-1185">Reference proteome</keyword>
<keyword id="KW-0735">Signal-anchor</keyword>
<keyword id="KW-0812">Transmembrane</keyword>
<keyword id="KW-1133">Transmembrane helix</keyword>
<keyword id="KW-0862">Zinc</keyword>
<sequence>METFTNDRLQLPRNMIENSMFEEEPDVVDLAKEPCLHPLEPDEVEYEPRGSRLLVRGLGEHEMDEDEEDYESSAKLLGMSFMNRSSGLRNSATGYRQSPDGTCSVPSARTLVICVFVIVVAVSVIMVIYLLPRCTFTKEGCHKTNQSAELIQPIATNGKVFPWAQIRLPTAIIPQRYELSLHPNLTSMTFRGSVTISLQALQDTRDIILHSTGHNISSVTFMSAVSSQEKQVEILEYPYHEQIAVVAPESLLTGHNYTLKIEYSANISNSYYGFYGITYTDKSNEKKNFAATQFEPLAARSAFPCFDEPAFKATFIIKITRDEHHTALSNMPKKSSVPTEEGLIQDEFSESVKMSTYLVAFIVGEMRNLSQDVNGTLVSVYAVPEKIDQVYHALDTTVKLLEFYQNYFEIQYPLKKLDLVAIPDFEAGAMENWGLLTFREETLLYDNATSSVADRKLVTKIIAHELAHQWFGNLVTMQWWNDLWLNEGFATFMEYFSVEKIFKELNSYEDFLDARFKTMRKDSLNSSHPISSSVQSSEQIEEMFDSLSYFKGASLLLMLKSYLSEDVFQHAIILYLHNHSYAAIQSDDLWDSFNEVTGKTLDVKKMMKTWTLQKGFPLVTVQRKGTELLLQQERFFPSMQPEIQDSDTSHLWHIPISYVTDGRNYSEYRSVSLLDKKSDVINLTEQVQWVKVNTNMTGYYIVHYAHDGWAALINQLKRNPYVLSDKDRANLINNIFELAGLGKVPLQMAFDLIDYLRNETHTAPITEALFQTDLIYNLLEKLGHMDLSSRLVTRVHKLLQNQIQQQTWTDEGTPSMRELRSALLEFACAHSLENCTTMATKLFDGWMASNGTQSLPTDVMTTVFKVGARTEKGWLFLFSMYSSMGSEAEKDKILEALASSADAHKLYWLMKSSLDGDIIRTQKLSLIIRTVGRQFPGHLLAWDFVKENWNKLVHKFHLGSYTIQSIVAGSTHLFSTKTHLSEVQEFFENQSEATLQLRCVQEAFEVIELNIQWMARNLKTLTLWL</sequence>
<gene>
    <name type="primary">Lnpep</name>
    <name type="synonym">Irap</name>
    <name type="synonym">Otase</name>
</gene>
<comment type="function">
    <text evidence="1">Release of an N-terminal amino acid, cleave before cysteine, leucine as well as other amino acids. Degrades peptide hormones such as oxytocin, vasopressin and angiotensin III, and plays a role in maintaining homeostasis during pregnancy. May be involved in the inactivation of neuronal peptides in the brain. Cleaves Met-enkephalin and dynorphin. Binds angiotensin IV and may be the angiotensin IV receptor in the brain (By similarity).</text>
</comment>
<comment type="catalytic activity">
    <reaction>
        <text>Release of an N-terminal amino acid, Cys-|-Xaa-, in which the half-cystine residue is involved in a disulfide loop, notably in oxytocin or vasopressin. Hydrolysis rates on a range of aminoacyl arylamides exceed that for the cystinyl derivative, however.</text>
        <dbReference type="EC" id="3.4.11.3"/>
    </reaction>
</comment>
<comment type="cofactor">
    <cofactor evidence="1">
        <name>Zn(2+)</name>
        <dbReference type="ChEBI" id="CHEBI:29105"/>
    </cofactor>
    <text evidence="1">Binds 1 zinc ion per subunit.</text>
</comment>
<comment type="subunit">
    <text evidence="1">Homodimer. Binds tankyrases 1 and 2 (By similarity).</text>
</comment>
<comment type="subcellular location">
    <subcellularLocation>
        <location>Cell membrane</location>
        <topology>Single-pass type II membrane protein</topology>
    </subcellularLocation>
    <subcellularLocation>
        <location>Endomembrane system</location>
        <topology>Single-pass type II membrane protein</topology>
    </subcellularLocation>
    <text>Localized mainly in intracellular vesicles together with GLUT4. Relocalizes to the plasma membrane in response to insulin. The dileucine internalization motif and/or the interaction with tankyrases may be involved in intracellular sequestration.</text>
</comment>
<comment type="tissue specificity">
    <text>Highly expressed in heart, brain, spleen, lung, kidney and white adipose tissue. Detected at lower levels in skeletal muscle and liver.</text>
</comment>
<comment type="PTM">
    <text>N-glycosylated.</text>
</comment>
<comment type="similarity">
    <text evidence="7">Belongs to the peptidase M1 family.</text>
</comment>
<accession>P97629</accession>
<accession>Q11009</accession>
<reference key="1">
    <citation type="journal article" date="1995" name="J. Biol. Chem.">
        <title>Cloning and characterization of a novel insulin-regulated membrane aminopeptidase from Glut4 vesicles.</title>
        <authorList>
            <person name="Keller S.R."/>
            <person name="Scott H.M."/>
            <person name="Mastick C.C."/>
            <person name="Aebersold R."/>
            <person name="Lienhard G.E."/>
        </authorList>
    </citation>
    <scope>NUCLEOTIDE SEQUENCE [MRNA]</scope>
    <scope>CHARACTERIZATION</scope>
    <source>
        <strain>Sprague-Dawley</strain>
        <tissue>Adipocyte</tissue>
    </source>
</reference>
<reference key="2">
    <citation type="journal article" date="1994" name="J. Biol. Chem.">
        <title>Characterization of a major protein in GLUT4 vesicles. Concentration in the vesicles and insulin-stimulated translocation to the plasma membrane.</title>
        <authorList>
            <person name="Mastick C.C."/>
            <person name="Aebersold R."/>
            <person name="Lienhard G.E."/>
        </authorList>
    </citation>
    <scope>PROTEIN SEQUENCE OF 168-176; 387-399; 731-740 AND 893-905</scope>
</reference>
<reference key="3">
    <citation type="journal article" date="2002" name="Arch. Biochem. Biophys.">
        <title>Protein kinase C-zeta phosphorylates insulin-responsive aminopeptidase in vitro at Ser-80 and Ser-91.</title>
        <authorList>
            <person name="Ryu J."/>
            <person name="Hah J.S."/>
            <person name="Park J.S.S."/>
            <person name="Lee W."/>
            <person name="Rampal A.L."/>
            <person name="Jung C.Y."/>
        </authorList>
    </citation>
    <scope>PHOSPHORYLATION AT SER-80 AND SER-91</scope>
    <scope>IDENTIFICATION BY MASS SPECTROMETRY</scope>
</reference>
<name>LCAP_RAT</name>